<accession>A9BD50</accession>
<feature type="chain" id="PRO_1000140647" description="Photosystem I iron-sulfur center">
    <location>
        <begin position="1"/>
        <end position="81"/>
    </location>
</feature>
<feature type="domain" description="4Fe-4S ferredoxin-type 1" evidence="1">
    <location>
        <begin position="2"/>
        <end position="31"/>
    </location>
</feature>
<feature type="domain" description="4Fe-4S ferredoxin-type 2" evidence="1">
    <location>
        <begin position="39"/>
        <end position="68"/>
    </location>
</feature>
<feature type="binding site" evidence="1">
    <location>
        <position position="11"/>
    </location>
    <ligand>
        <name>[4Fe-4S] cluster</name>
        <dbReference type="ChEBI" id="CHEBI:49883"/>
        <label>1</label>
    </ligand>
</feature>
<feature type="binding site" evidence="1">
    <location>
        <position position="14"/>
    </location>
    <ligand>
        <name>[4Fe-4S] cluster</name>
        <dbReference type="ChEBI" id="CHEBI:49883"/>
        <label>1</label>
    </ligand>
</feature>
<feature type="binding site" evidence="1">
    <location>
        <position position="17"/>
    </location>
    <ligand>
        <name>[4Fe-4S] cluster</name>
        <dbReference type="ChEBI" id="CHEBI:49883"/>
        <label>1</label>
    </ligand>
</feature>
<feature type="binding site" evidence="1">
    <location>
        <position position="21"/>
    </location>
    <ligand>
        <name>[4Fe-4S] cluster</name>
        <dbReference type="ChEBI" id="CHEBI:49883"/>
        <label>2</label>
    </ligand>
</feature>
<feature type="binding site" evidence="1">
    <location>
        <position position="48"/>
    </location>
    <ligand>
        <name>[4Fe-4S] cluster</name>
        <dbReference type="ChEBI" id="CHEBI:49883"/>
        <label>2</label>
    </ligand>
</feature>
<feature type="binding site" evidence="1">
    <location>
        <position position="51"/>
    </location>
    <ligand>
        <name>[4Fe-4S] cluster</name>
        <dbReference type="ChEBI" id="CHEBI:49883"/>
        <label>2</label>
    </ligand>
</feature>
<feature type="binding site" evidence="1">
    <location>
        <position position="54"/>
    </location>
    <ligand>
        <name>[4Fe-4S] cluster</name>
        <dbReference type="ChEBI" id="CHEBI:49883"/>
        <label>2</label>
    </ligand>
</feature>
<feature type="binding site" evidence="1">
    <location>
        <position position="58"/>
    </location>
    <ligand>
        <name>[4Fe-4S] cluster</name>
        <dbReference type="ChEBI" id="CHEBI:49883"/>
        <label>1</label>
    </ligand>
</feature>
<gene>
    <name evidence="1" type="primary">psaC</name>
    <name type="ordered locus">P9211_17321</name>
</gene>
<proteinExistence type="inferred from homology"/>
<reference key="1">
    <citation type="journal article" date="2007" name="PLoS Genet.">
        <title>Patterns and implications of gene gain and loss in the evolution of Prochlorococcus.</title>
        <authorList>
            <person name="Kettler G.C."/>
            <person name="Martiny A.C."/>
            <person name="Huang K."/>
            <person name="Zucker J."/>
            <person name="Coleman M.L."/>
            <person name="Rodrigue S."/>
            <person name="Chen F."/>
            <person name="Lapidus A."/>
            <person name="Ferriera S."/>
            <person name="Johnson J."/>
            <person name="Steglich C."/>
            <person name="Church G.M."/>
            <person name="Richardson P."/>
            <person name="Chisholm S.W."/>
        </authorList>
    </citation>
    <scope>NUCLEOTIDE SEQUENCE [LARGE SCALE GENOMIC DNA]</scope>
    <source>
        <strain>MIT 9211</strain>
    </source>
</reference>
<name>PSAC_PROM4</name>
<comment type="function">
    <text evidence="1">Apoprotein for the two 4Fe-4S centers FA and FB of photosystem I (PSI); essential for photochemical activity. FB is the terminal electron acceptor of PSI, donating electrons to ferredoxin. The C-terminus interacts with PsaA/B/D and helps assemble the protein into the PSI complex. Required for binding of PsaD and PsaE to PSI. PSI is a plastocyanin/cytochrome c6-ferredoxin oxidoreductase, converting photonic excitation into a charge separation, which transfers an electron from the donor P700 chlorophyll pair to the spectroscopically characterized acceptors A0, A1, FX, FA and FB in turn.</text>
</comment>
<comment type="catalytic activity">
    <reaction evidence="1">
        <text>reduced [plastocyanin] + hnu + oxidized [2Fe-2S]-[ferredoxin] = oxidized [plastocyanin] + reduced [2Fe-2S]-[ferredoxin]</text>
        <dbReference type="Rhea" id="RHEA:30407"/>
        <dbReference type="Rhea" id="RHEA-COMP:10000"/>
        <dbReference type="Rhea" id="RHEA-COMP:10001"/>
        <dbReference type="Rhea" id="RHEA-COMP:10039"/>
        <dbReference type="Rhea" id="RHEA-COMP:10040"/>
        <dbReference type="ChEBI" id="CHEBI:29036"/>
        <dbReference type="ChEBI" id="CHEBI:30212"/>
        <dbReference type="ChEBI" id="CHEBI:33737"/>
        <dbReference type="ChEBI" id="CHEBI:33738"/>
        <dbReference type="ChEBI" id="CHEBI:49552"/>
        <dbReference type="EC" id="1.97.1.12"/>
    </reaction>
</comment>
<comment type="cofactor">
    <cofactor evidence="1">
        <name>[4Fe-4S] cluster</name>
        <dbReference type="ChEBI" id="CHEBI:49883"/>
    </cofactor>
    <text evidence="1">Binds 2 [4Fe-4S] clusters. Cluster 2 is most probably the spectroscopically characterized electron acceptor FA and cluster 1 is most probably FB.</text>
</comment>
<comment type="subunit">
    <text evidence="1">The cyanobacterial PSI reaction center is composed of one copy each of PsaA,B,C,D,E,F,I,J,K,L,M and X, and forms trimeric complexes.</text>
</comment>
<comment type="subcellular location">
    <subcellularLocation>
        <location evidence="1">Cellular thylakoid membrane</location>
        <topology evidence="1">Peripheral membrane protein</topology>
        <orientation evidence="1">Cytoplasmic side</orientation>
    </subcellularLocation>
</comment>
<organism>
    <name type="scientific">Prochlorococcus marinus (strain MIT 9211)</name>
    <dbReference type="NCBI Taxonomy" id="93059"/>
    <lineage>
        <taxon>Bacteria</taxon>
        <taxon>Bacillati</taxon>
        <taxon>Cyanobacteriota</taxon>
        <taxon>Cyanophyceae</taxon>
        <taxon>Synechococcales</taxon>
        <taxon>Prochlorococcaceae</taxon>
        <taxon>Prochlorococcus</taxon>
    </lineage>
</organism>
<dbReference type="EC" id="1.97.1.12" evidence="1"/>
<dbReference type="EMBL" id="CP000878">
    <property type="protein sequence ID" value="ABX09663.1"/>
    <property type="molecule type" value="Genomic_DNA"/>
</dbReference>
<dbReference type="RefSeq" id="WP_012196283.1">
    <property type="nucleotide sequence ID" value="NC_009976.1"/>
</dbReference>
<dbReference type="SMR" id="A9BD50"/>
<dbReference type="STRING" id="93059.P9211_17321"/>
<dbReference type="KEGG" id="pmj:P9211_17321"/>
<dbReference type="eggNOG" id="COG1143">
    <property type="taxonomic scope" value="Bacteria"/>
</dbReference>
<dbReference type="HOGENOM" id="CLU_139698_8_0_3"/>
<dbReference type="OrthoDB" id="9804603at2"/>
<dbReference type="Proteomes" id="UP000000788">
    <property type="component" value="Chromosome"/>
</dbReference>
<dbReference type="GO" id="GO:0009522">
    <property type="term" value="C:photosystem I"/>
    <property type="evidence" value="ECO:0007669"/>
    <property type="project" value="UniProtKB-KW"/>
</dbReference>
<dbReference type="GO" id="GO:0031676">
    <property type="term" value="C:plasma membrane-derived thylakoid membrane"/>
    <property type="evidence" value="ECO:0007669"/>
    <property type="project" value="UniProtKB-SubCell"/>
</dbReference>
<dbReference type="GO" id="GO:0051539">
    <property type="term" value="F:4 iron, 4 sulfur cluster binding"/>
    <property type="evidence" value="ECO:0007669"/>
    <property type="project" value="UniProtKB-KW"/>
</dbReference>
<dbReference type="GO" id="GO:0009055">
    <property type="term" value="F:electron transfer activity"/>
    <property type="evidence" value="ECO:0007669"/>
    <property type="project" value="UniProtKB-UniRule"/>
</dbReference>
<dbReference type="GO" id="GO:0046872">
    <property type="term" value="F:metal ion binding"/>
    <property type="evidence" value="ECO:0007669"/>
    <property type="project" value="UniProtKB-KW"/>
</dbReference>
<dbReference type="GO" id="GO:0016491">
    <property type="term" value="F:oxidoreductase activity"/>
    <property type="evidence" value="ECO:0007669"/>
    <property type="project" value="UniProtKB-KW"/>
</dbReference>
<dbReference type="GO" id="GO:0009773">
    <property type="term" value="P:photosynthetic electron transport in photosystem I"/>
    <property type="evidence" value="ECO:0007669"/>
    <property type="project" value="InterPro"/>
</dbReference>
<dbReference type="FunFam" id="3.30.70.20:FF:000001">
    <property type="entry name" value="Photosystem I iron-sulfur center"/>
    <property type="match status" value="1"/>
</dbReference>
<dbReference type="Gene3D" id="3.30.70.20">
    <property type="match status" value="1"/>
</dbReference>
<dbReference type="HAMAP" id="MF_01303">
    <property type="entry name" value="PSI_PsaC"/>
    <property type="match status" value="1"/>
</dbReference>
<dbReference type="InterPro" id="IPR017896">
    <property type="entry name" value="4Fe4S_Fe-S-bd"/>
</dbReference>
<dbReference type="InterPro" id="IPR017900">
    <property type="entry name" value="4Fe4S_Fe_S_CS"/>
</dbReference>
<dbReference type="InterPro" id="IPR050157">
    <property type="entry name" value="PSI_iron-sulfur_center"/>
</dbReference>
<dbReference type="InterPro" id="IPR017491">
    <property type="entry name" value="PSI_PsaC"/>
</dbReference>
<dbReference type="NCBIfam" id="TIGR03048">
    <property type="entry name" value="PS_I_psaC"/>
    <property type="match status" value="1"/>
</dbReference>
<dbReference type="PANTHER" id="PTHR24960:SF79">
    <property type="entry name" value="PHOTOSYSTEM I IRON-SULFUR CENTER"/>
    <property type="match status" value="1"/>
</dbReference>
<dbReference type="PANTHER" id="PTHR24960">
    <property type="entry name" value="PHOTOSYSTEM I IRON-SULFUR CENTER-RELATED"/>
    <property type="match status" value="1"/>
</dbReference>
<dbReference type="Pfam" id="PF12838">
    <property type="entry name" value="Fer4_7"/>
    <property type="match status" value="1"/>
</dbReference>
<dbReference type="SUPFAM" id="SSF54862">
    <property type="entry name" value="4Fe-4S ferredoxins"/>
    <property type="match status" value="1"/>
</dbReference>
<dbReference type="PROSITE" id="PS00198">
    <property type="entry name" value="4FE4S_FER_1"/>
    <property type="match status" value="2"/>
</dbReference>
<dbReference type="PROSITE" id="PS51379">
    <property type="entry name" value="4FE4S_FER_2"/>
    <property type="match status" value="2"/>
</dbReference>
<protein>
    <recommendedName>
        <fullName evidence="1">Photosystem I iron-sulfur center</fullName>
        <ecNumber evidence="1">1.97.1.12</ecNumber>
    </recommendedName>
    <alternativeName>
        <fullName evidence="1">9 kDa polypeptide</fullName>
    </alternativeName>
    <alternativeName>
        <fullName evidence="1">PSI-C</fullName>
    </alternativeName>
    <alternativeName>
        <fullName evidence="1">Photosystem I subunit VII</fullName>
    </alternativeName>
    <alternativeName>
        <fullName evidence="1">PsaC</fullName>
    </alternativeName>
</protein>
<sequence length="81" mass="8856">MSHAVKIYDTCIGCTQCVRACPLDVLEMVPWDGCKAAQIASSPRTEDCVGCKRCETACPTDFLSIRVYLGDETTRSMGLAY</sequence>
<keyword id="KW-0004">4Fe-4S</keyword>
<keyword id="KW-0249">Electron transport</keyword>
<keyword id="KW-0408">Iron</keyword>
<keyword id="KW-0411">Iron-sulfur</keyword>
<keyword id="KW-0472">Membrane</keyword>
<keyword id="KW-0479">Metal-binding</keyword>
<keyword id="KW-0560">Oxidoreductase</keyword>
<keyword id="KW-0602">Photosynthesis</keyword>
<keyword id="KW-0603">Photosystem I</keyword>
<keyword id="KW-1185">Reference proteome</keyword>
<keyword id="KW-0677">Repeat</keyword>
<keyword id="KW-0793">Thylakoid</keyword>
<keyword id="KW-0813">Transport</keyword>
<evidence type="ECO:0000255" key="1">
    <source>
        <dbReference type="HAMAP-Rule" id="MF_01303"/>
    </source>
</evidence>